<reference key="1">
    <citation type="journal article" date="2000" name="Nucleic Acids Res.">
        <title>Complete genome sequence of the alkaliphilic bacterium Bacillus halodurans and genomic sequence comparison with Bacillus subtilis.</title>
        <authorList>
            <person name="Takami H."/>
            <person name="Nakasone K."/>
            <person name="Takaki Y."/>
            <person name="Maeno G."/>
            <person name="Sasaki R."/>
            <person name="Masui N."/>
            <person name="Fuji F."/>
            <person name="Hirama C."/>
            <person name="Nakamura Y."/>
            <person name="Ogasawara N."/>
            <person name="Kuhara S."/>
            <person name="Horikoshi K."/>
        </authorList>
    </citation>
    <scope>NUCLEOTIDE SEQUENCE [LARGE SCALE GENOMIC DNA]</scope>
    <source>
        <strain>ATCC BAA-125 / DSM 18197 / FERM 7344 / JCM 9153 / C-125</strain>
    </source>
</reference>
<feature type="chain" id="PRO_0000150150" description="Phosphoserine aminotransferase">
    <location>
        <begin position="1"/>
        <end position="361"/>
    </location>
</feature>
<feature type="binding site" evidence="1">
    <location>
        <position position="42"/>
    </location>
    <ligand>
        <name>L-glutamate</name>
        <dbReference type="ChEBI" id="CHEBI:29985"/>
    </ligand>
</feature>
<feature type="binding site" evidence="1">
    <location>
        <begin position="76"/>
        <end position="77"/>
    </location>
    <ligand>
        <name>pyridoxal 5'-phosphate</name>
        <dbReference type="ChEBI" id="CHEBI:597326"/>
    </ligand>
</feature>
<feature type="binding site" evidence="1">
    <location>
        <position position="102"/>
    </location>
    <ligand>
        <name>pyridoxal 5'-phosphate</name>
        <dbReference type="ChEBI" id="CHEBI:597326"/>
    </ligand>
</feature>
<feature type="binding site" evidence="1">
    <location>
        <position position="152"/>
    </location>
    <ligand>
        <name>pyridoxal 5'-phosphate</name>
        <dbReference type="ChEBI" id="CHEBI:597326"/>
    </ligand>
</feature>
<feature type="binding site" evidence="1">
    <location>
        <position position="172"/>
    </location>
    <ligand>
        <name>pyridoxal 5'-phosphate</name>
        <dbReference type="ChEBI" id="CHEBI:597326"/>
    </ligand>
</feature>
<feature type="binding site" evidence="1">
    <location>
        <position position="195"/>
    </location>
    <ligand>
        <name>pyridoxal 5'-phosphate</name>
        <dbReference type="ChEBI" id="CHEBI:597326"/>
    </ligand>
</feature>
<feature type="binding site" evidence="1">
    <location>
        <begin position="237"/>
        <end position="238"/>
    </location>
    <ligand>
        <name>pyridoxal 5'-phosphate</name>
        <dbReference type="ChEBI" id="CHEBI:597326"/>
    </ligand>
</feature>
<feature type="modified residue" description="N6-(pyridoxal phosphate)lysine" evidence="1">
    <location>
        <position position="196"/>
    </location>
</feature>
<dbReference type="EC" id="2.6.1.52" evidence="1"/>
<dbReference type="EMBL" id="BA000004">
    <property type="protein sequence ID" value="BAB04907.1"/>
    <property type="molecule type" value="Genomic_DNA"/>
</dbReference>
<dbReference type="PIR" id="D83798">
    <property type="entry name" value="D83798"/>
</dbReference>
<dbReference type="RefSeq" id="WP_010897357.1">
    <property type="nucleotide sequence ID" value="NC_002570.2"/>
</dbReference>
<dbReference type="SMR" id="Q9KDM4"/>
<dbReference type="STRING" id="272558.gene:10727082"/>
<dbReference type="KEGG" id="bha:BH1188"/>
<dbReference type="eggNOG" id="COG1932">
    <property type="taxonomic scope" value="Bacteria"/>
</dbReference>
<dbReference type="HOGENOM" id="CLU_034866_0_2_9"/>
<dbReference type="OrthoDB" id="9809412at2"/>
<dbReference type="UniPathway" id="UPA00135">
    <property type="reaction ID" value="UER00197"/>
</dbReference>
<dbReference type="Proteomes" id="UP000001258">
    <property type="component" value="Chromosome"/>
</dbReference>
<dbReference type="GO" id="GO:0005737">
    <property type="term" value="C:cytoplasm"/>
    <property type="evidence" value="ECO:0007669"/>
    <property type="project" value="UniProtKB-SubCell"/>
</dbReference>
<dbReference type="GO" id="GO:0004648">
    <property type="term" value="F:O-phospho-L-serine:2-oxoglutarate aminotransferase activity"/>
    <property type="evidence" value="ECO:0007669"/>
    <property type="project" value="UniProtKB-UniRule"/>
</dbReference>
<dbReference type="GO" id="GO:0030170">
    <property type="term" value="F:pyridoxal phosphate binding"/>
    <property type="evidence" value="ECO:0007669"/>
    <property type="project" value="UniProtKB-UniRule"/>
</dbReference>
<dbReference type="GO" id="GO:0006564">
    <property type="term" value="P:L-serine biosynthetic process"/>
    <property type="evidence" value="ECO:0007669"/>
    <property type="project" value="UniProtKB-UniRule"/>
</dbReference>
<dbReference type="CDD" id="cd00611">
    <property type="entry name" value="PSAT_like"/>
    <property type="match status" value="1"/>
</dbReference>
<dbReference type="FunFam" id="3.40.640.10:FF:000010">
    <property type="entry name" value="Phosphoserine aminotransferase"/>
    <property type="match status" value="1"/>
</dbReference>
<dbReference type="FunFam" id="3.90.1150.10:FF:000006">
    <property type="entry name" value="Phosphoserine aminotransferase"/>
    <property type="match status" value="1"/>
</dbReference>
<dbReference type="Gene3D" id="3.90.1150.10">
    <property type="entry name" value="Aspartate Aminotransferase, domain 1"/>
    <property type="match status" value="1"/>
</dbReference>
<dbReference type="Gene3D" id="3.40.640.10">
    <property type="entry name" value="Type I PLP-dependent aspartate aminotransferase-like (Major domain)"/>
    <property type="match status" value="1"/>
</dbReference>
<dbReference type="HAMAP" id="MF_00160">
    <property type="entry name" value="SerC_aminotrans_5"/>
    <property type="match status" value="1"/>
</dbReference>
<dbReference type="InterPro" id="IPR000192">
    <property type="entry name" value="Aminotrans_V_dom"/>
</dbReference>
<dbReference type="InterPro" id="IPR020578">
    <property type="entry name" value="Aminotrans_V_PyrdxlP_BS"/>
</dbReference>
<dbReference type="InterPro" id="IPR022278">
    <property type="entry name" value="Pser_aminoTfrase"/>
</dbReference>
<dbReference type="InterPro" id="IPR015424">
    <property type="entry name" value="PyrdxlP-dep_Trfase"/>
</dbReference>
<dbReference type="InterPro" id="IPR015421">
    <property type="entry name" value="PyrdxlP-dep_Trfase_major"/>
</dbReference>
<dbReference type="InterPro" id="IPR015422">
    <property type="entry name" value="PyrdxlP-dep_Trfase_small"/>
</dbReference>
<dbReference type="NCBIfam" id="NF003764">
    <property type="entry name" value="PRK05355.1"/>
    <property type="match status" value="1"/>
</dbReference>
<dbReference type="NCBIfam" id="TIGR01364">
    <property type="entry name" value="serC_1"/>
    <property type="match status" value="1"/>
</dbReference>
<dbReference type="PANTHER" id="PTHR43247">
    <property type="entry name" value="PHOSPHOSERINE AMINOTRANSFERASE"/>
    <property type="match status" value="1"/>
</dbReference>
<dbReference type="PANTHER" id="PTHR43247:SF1">
    <property type="entry name" value="PHOSPHOSERINE AMINOTRANSFERASE"/>
    <property type="match status" value="1"/>
</dbReference>
<dbReference type="Pfam" id="PF00266">
    <property type="entry name" value="Aminotran_5"/>
    <property type="match status" value="1"/>
</dbReference>
<dbReference type="PIRSF" id="PIRSF000525">
    <property type="entry name" value="SerC"/>
    <property type="match status" value="1"/>
</dbReference>
<dbReference type="SUPFAM" id="SSF53383">
    <property type="entry name" value="PLP-dependent transferases"/>
    <property type="match status" value="1"/>
</dbReference>
<dbReference type="PROSITE" id="PS00595">
    <property type="entry name" value="AA_TRANSFER_CLASS_5"/>
    <property type="match status" value="1"/>
</dbReference>
<organism>
    <name type="scientific">Halalkalibacterium halodurans (strain ATCC BAA-125 / DSM 18197 / FERM 7344 / JCM 9153 / C-125)</name>
    <name type="common">Bacillus halodurans</name>
    <dbReference type="NCBI Taxonomy" id="272558"/>
    <lineage>
        <taxon>Bacteria</taxon>
        <taxon>Bacillati</taxon>
        <taxon>Bacillota</taxon>
        <taxon>Bacilli</taxon>
        <taxon>Bacillales</taxon>
        <taxon>Bacillaceae</taxon>
        <taxon>Halalkalibacterium (ex Joshi et al. 2022)</taxon>
    </lineage>
</organism>
<comment type="function">
    <text evidence="1">Catalyzes the reversible conversion of 3-phosphohydroxypyruvate to phosphoserine and of 3-hydroxy-2-oxo-4-phosphonooxybutanoate to phosphohydroxythreonine.</text>
</comment>
<comment type="catalytic activity">
    <reaction evidence="1">
        <text>O-phospho-L-serine + 2-oxoglutarate = 3-phosphooxypyruvate + L-glutamate</text>
        <dbReference type="Rhea" id="RHEA:14329"/>
        <dbReference type="ChEBI" id="CHEBI:16810"/>
        <dbReference type="ChEBI" id="CHEBI:18110"/>
        <dbReference type="ChEBI" id="CHEBI:29985"/>
        <dbReference type="ChEBI" id="CHEBI:57524"/>
        <dbReference type="EC" id="2.6.1.52"/>
    </reaction>
</comment>
<comment type="catalytic activity">
    <reaction evidence="1">
        <text>4-(phosphooxy)-L-threonine + 2-oxoglutarate = (R)-3-hydroxy-2-oxo-4-phosphooxybutanoate + L-glutamate</text>
        <dbReference type="Rhea" id="RHEA:16573"/>
        <dbReference type="ChEBI" id="CHEBI:16810"/>
        <dbReference type="ChEBI" id="CHEBI:29985"/>
        <dbReference type="ChEBI" id="CHEBI:58452"/>
        <dbReference type="ChEBI" id="CHEBI:58538"/>
        <dbReference type="EC" id="2.6.1.52"/>
    </reaction>
</comment>
<comment type="cofactor">
    <cofactor evidence="1">
        <name>pyridoxal 5'-phosphate</name>
        <dbReference type="ChEBI" id="CHEBI:597326"/>
    </cofactor>
    <text evidence="1">Binds 1 pyridoxal phosphate per subunit.</text>
</comment>
<comment type="pathway">
    <text evidence="1">Amino-acid biosynthesis; L-serine biosynthesis; L-serine from 3-phospho-D-glycerate: step 2/3.</text>
</comment>
<comment type="subunit">
    <text evidence="1">Homodimer.</text>
</comment>
<comment type="subcellular location">
    <subcellularLocation>
        <location evidence="1">Cytoplasm</location>
    </subcellularLocation>
</comment>
<comment type="similarity">
    <text evidence="1">Belongs to the class-V pyridoxal-phosphate-dependent aminotransferase family. SerC subfamily.</text>
</comment>
<proteinExistence type="inferred from homology"/>
<accession>Q9KDM4</accession>
<name>SERC_HALH5</name>
<evidence type="ECO:0000255" key="1">
    <source>
        <dbReference type="HAMAP-Rule" id="MF_00160"/>
    </source>
</evidence>
<gene>
    <name evidence="1" type="primary">serC</name>
    <name type="ordered locus">BH1188</name>
</gene>
<protein>
    <recommendedName>
        <fullName evidence="1">Phosphoserine aminotransferase</fullName>
        <ecNumber evidence="1">2.6.1.52</ecNumber>
    </recommendedName>
    <alternativeName>
        <fullName evidence="1">Phosphohydroxythreonine aminotransferase</fullName>
        <shortName evidence="1">PSAT</shortName>
    </alternativeName>
</protein>
<keyword id="KW-0028">Amino-acid biosynthesis</keyword>
<keyword id="KW-0032">Aminotransferase</keyword>
<keyword id="KW-0963">Cytoplasm</keyword>
<keyword id="KW-0663">Pyridoxal phosphate</keyword>
<keyword id="KW-1185">Reference proteome</keyword>
<keyword id="KW-0718">Serine biosynthesis</keyword>
<keyword id="KW-0808">Transferase</keyword>
<sequence length="361" mass="40508">MKRAYNFNAGPSALPTEVLEKAQSELLDFENTGMSVMELSHRSKEYENVHHTAAQLLRDLLNIPEDYDVLFLQGGASLQFAMIPLNFLDEGKVANYILTGSWSEKALKEAKFIGKTAIAGSTKESNYTFIPDISSLQYNEHDSYVHLTSNNTIFGTQWHTYPSVSHAPLIVDMSSDILSRPLPVKNFDLIYAGAQKNLGPSGVTVVIIRKELLKRNVDHVPTMLRYQTHAEKQSLYNTPPTFGIYMLKEVLQWLKNIGGTEQIAERNQTKANLIYGAIDESEQFYKGHATKESRSLMNVTFTLPTEELTQQFLSEAKEKGFVGLNGHRSVGGCRASIYNGVPVEACEALADFMHSFYQTHR</sequence>